<proteinExistence type="evidence at protein level"/>
<organism>
    <name type="scientific">Rattus norvegicus</name>
    <name type="common">Rat</name>
    <dbReference type="NCBI Taxonomy" id="10116"/>
    <lineage>
        <taxon>Eukaryota</taxon>
        <taxon>Metazoa</taxon>
        <taxon>Chordata</taxon>
        <taxon>Craniata</taxon>
        <taxon>Vertebrata</taxon>
        <taxon>Euteleostomi</taxon>
        <taxon>Mammalia</taxon>
        <taxon>Eutheria</taxon>
        <taxon>Euarchontoglires</taxon>
        <taxon>Glires</taxon>
        <taxon>Rodentia</taxon>
        <taxon>Myomorpha</taxon>
        <taxon>Muroidea</taxon>
        <taxon>Muridae</taxon>
        <taxon>Murinae</taxon>
        <taxon>Rattus</taxon>
    </lineage>
</organism>
<sequence length="485" mass="55442">MSVPLLKIGVVLSTMAMITNWMSQTLPSLVGLNTTRLSAASGGTLDRSTGVLPTNPEESWQVYSSAQDSEGRCICTVVAPQQTMCSRDARTKQLRQLLEKVQNMSQSIEVLDRRTQRDLQYVEKMENQMKGLESKFRQVEESHKQHLARQFKAIKAKMDELRPLIPVLEEYKADAKLVLQFKEEVQNLTSVLNELQEEIGAYDYDELQSRVSNLEERLRACMQKLACGKLTGISDPVTVKTSGSRFGSWMTDPLAPEGDNRVWYMDGYHNNRFVREYKSMVDFMNTDNFTSHRLPHPWSGTGQVVYNGSIYFNKFQSHIIIRFDLKTETILKTRSLDYAGYNNMYHYAWGGHSDIDLMVDENGLWAVYATNQNAGNIVISKLDPVSLQILQTWNTSYPKRSAGEAFIICGTLYVTNGYSGGTKVHYAYQTNASTYEYIDIPFQNKYSHISMLDYNPKDRALYAWNNGHQTLYNVTLFHVIRSDEL</sequence>
<feature type="signal peptide" evidence="4">
    <location>
        <begin position="1"/>
        <end position="24"/>
    </location>
</feature>
<feature type="chain" id="PRO_0000020076" description="Noelin">
    <location>
        <begin position="25"/>
        <end position="485"/>
    </location>
</feature>
<feature type="domain" description="Olfactomedin-like" evidence="5">
    <location>
        <begin position="226"/>
        <end position="478"/>
    </location>
</feature>
<feature type="coiled-coil region" evidence="4">
    <location>
        <begin position="87"/>
        <end position="225"/>
    </location>
</feature>
<feature type="glycosylation site" description="N-linked (GlcNAc...) asparagine" evidence="4">
    <location>
        <position position="33"/>
    </location>
</feature>
<feature type="glycosylation site" description="N-linked (GlcNAc...) asparagine" evidence="4">
    <location>
        <position position="103"/>
    </location>
</feature>
<feature type="glycosylation site" description="N-linked (GlcNAc...) asparagine" evidence="4">
    <location>
        <position position="187"/>
    </location>
</feature>
<feature type="glycosylation site" description="N-linked (GlcNAc...) asparagine" evidence="4">
    <location>
        <position position="288"/>
    </location>
</feature>
<feature type="glycosylation site" description="N-linked (GlcNAc...) asparagine" evidence="4">
    <location>
        <position position="307"/>
    </location>
</feature>
<feature type="glycosylation site" description="N-linked (GlcNAc...) asparagine" evidence="4">
    <location>
        <position position="394"/>
    </location>
</feature>
<feature type="glycosylation site" description="N-linked (GlcNAc...) asparagine" evidence="4">
    <location>
        <position position="431"/>
    </location>
</feature>
<feature type="glycosylation site" description="N-linked (GlcNAc...) asparagine" evidence="4">
    <location>
        <position position="473"/>
    </location>
</feature>
<feature type="disulfide bond" description="Interchain" evidence="1">
    <location>
        <position position="221"/>
    </location>
</feature>
<feature type="disulfide bond" evidence="5">
    <location>
        <begin position="227"/>
        <end position="409"/>
    </location>
</feature>
<feature type="splice variant" id="VSP_003765" description="In isoform 3 and isoform 4." evidence="9">
    <original>MSVPLLKIGVVLSTMAMITNWMSQTLPSLVGLNTTRLSAASGGTLDRSTG</original>
    <variation>MQPARKLLSLLVLLVMGTELTQ</variation>
    <location>
        <begin position="1"/>
        <end position="50"/>
    </location>
</feature>
<feature type="splice variant" id="VSP_003766" description="In isoform 2 and isoform 4." evidence="9">
    <original>A</original>
    <variation>G</variation>
    <location>
        <position position="153"/>
    </location>
</feature>
<feature type="splice variant" id="VSP_003767" description="In isoform 2 and isoform 4." evidence="9">
    <location>
        <begin position="154"/>
        <end position="485"/>
    </location>
</feature>
<dbReference type="EMBL" id="U03417">
    <property type="protein sequence ID" value="AAC04321.1"/>
    <property type="molecule type" value="mRNA"/>
</dbReference>
<dbReference type="EMBL" id="U03416">
    <property type="protein sequence ID" value="AAC04320.1"/>
    <property type="molecule type" value="mRNA"/>
</dbReference>
<dbReference type="EMBL" id="U03415">
    <property type="protein sequence ID" value="AAC04319.1"/>
    <property type="molecule type" value="mRNA"/>
</dbReference>
<dbReference type="EMBL" id="U03414">
    <property type="protein sequence ID" value="AAC04317.1"/>
    <property type="molecule type" value="mRNA"/>
</dbReference>
<dbReference type="PIR" id="I73636">
    <property type="entry name" value="I73636"/>
</dbReference>
<dbReference type="PIR" id="I73637">
    <property type="entry name" value="I73637"/>
</dbReference>
<dbReference type="RefSeq" id="NP_001416531.1">
    <molecule id="Q62609-2"/>
    <property type="nucleotide sequence ID" value="NM_001429602.1"/>
</dbReference>
<dbReference type="RefSeq" id="NP_001416532.1">
    <molecule id="Q62609-3"/>
    <property type="nucleotide sequence ID" value="NM_001429603.1"/>
</dbReference>
<dbReference type="RefSeq" id="NP_001416533.1">
    <molecule id="Q62609-4"/>
    <property type="nucleotide sequence ID" value="NM_001429604.1"/>
</dbReference>
<dbReference type="RefSeq" id="NP_446025.1">
    <molecule id="Q62609-1"/>
    <property type="nucleotide sequence ID" value="NM_053573.2"/>
</dbReference>
<dbReference type="RefSeq" id="XP_006233937.1">
    <property type="nucleotide sequence ID" value="XM_006233875.3"/>
</dbReference>
<dbReference type="RefSeq" id="XP_006233938.1">
    <property type="nucleotide sequence ID" value="XM_006233876.3"/>
</dbReference>
<dbReference type="RefSeq" id="XP_006233939.1">
    <property type="nucleotide sequence ID" value="XM_006233877.2"/>
</dbReference>
<dbReference type="SMR" id="Q62609"/>
<dbReference type="CORUM" id="Q62609"/>
<dbReference type="FunCoup" id="Q62609">
    <property type="interactions" value="1670"/>
</dbReference>
<dbReference type="STRING" id="10116.ENSRNOP00000013443"/>
<dbReference type="GlyCosmos" id="Q62609">
    <property type="glycosylation" value="8 sites, 2 glycans"/>
</dbReference>
<dbReference type="GlyGen" id="Q62609">
    <property type="glycosylation" value="8 sites, 2 N-linked glycans (1 site), 2 N-linked;o-linked glycans (2 sites)"/>
</dbReference>
<dbReference type="iPTMnet" id="Q62609"/>
<dbReference type="PhosphoSitePlus" id="Q62609"/>
<dbReference type="jPOST" id="Q62609"/>
<dbReference type="PaxDb" id="10116-ENSRNOP00000013443"/>
<dbReference type="ABCD" id="Q62609">
    <property type="antibodies" value="1 sequenced antibody"/>
</dbReference>
<dbReference type="Ensembl" id="ENSRNOT00000013443.7">
    <molecule id="Q62609-1"/>
    <property type="protein sequence ID" value="ENSRNOP00000013443.3"/>
    <property type="gene ID" value="ENSRNOG00000009862.9"/>
</dbReference>
<dbReference type="Ensembl" id="ENSRNOT00000104931.1">
    <molecule id="Q62609-3"/>
    <property type="protein sequence ID" value="ENSRNOP00000077356.1"/>
    <property type="gene ID" value="ENSRNOG00000009862.9"/>
</dbReference>
<dbReference type="GeneID" id="93667"/>
<dbReference type="KEGG" id="rno:93667"/>
<dbReference type="UCSC" id="RGD:620320">
    <molecule id="Q62609-1"/>
    <property type="organism name" value="rat"/>
</dbReference>
<dbReference type="AGR" id="RGD:620320"/>
<dbReference type="CTD" id="10439"/>
<dbReference type="RGD" id="620320">
    <property type="gene designation" value="Olfm1"/>
</dbReference>
<dbReference type="eggNOG" id="KOG3545">
    <property type="taxonomic scope" value="Eukaryota"/>
</dbReference>
<dbReference type="GeneTree" id="ENSGT00940000156959"/>
<dbReference type="HOGENOM" id="CLU_035236_0_0_1"/>
<dbReference type="InParanoid" id="Q62609"/>
<dbReference type="OMA" id="MSTDNFT"/>
<dbReference type="OrthoDB" id="8626508at2759"/>
<dbReference type="PhylomeDB" id="Q62609"/>
<dbReference type="TreeFam" id="TF315964"/>
<dbReference type="PRO" id="PR:Q62609"/>
<dbReference type="Proteomes" id="UP000002494">
    <property type="component" value="Chromosome 3"/>
</dbReference>
<dbReference type="Bgee" id="ENSRNOG00000009862">
    <property type="expression patterns" value="Expressed in Ammon's horn and 20 other cell types or tissues"/>
</dbReference>
<dbReference type="GO" id="GO:0032281">
    <property type="term" value="C:AMPA glutamate receptor complex"/>
    <property type="evidence" value="ECO:0000266"/>
    <property type="project" value="RGD"/>
</dbReference>
<dbReference type="GO" id="GO:0030424">
    <property type="term" value="C:axon"/>
    <property type="evidence" value="ECO:0000250"/>
    <property type="project" value="UniProtKB"/>
</dbReference>
<dbReference type="GO" id="GO:0044295">
    <property type="term" value="C:axonal growth cone"/>
    <property type="evidence" value="ECO:0000250"/>
    <property type="project" value="UniProtKB"/>
</dbReference>
<dbReference type="GO" id="GO:0005783">
    <property type="term" value="C:endoplasmic reticulum"/>
    <property type="evidence" value="ECO:0000250"/>
    <property type="project" value="UniProtKB"/>
</dbReference>
<dbReference type="GO" id="GO:0005615">
    <property type="term" value="C:extracellular space"/>
    <property type="evidence" value="ECO:0000250"/>
    <property type="project" value="UniProtKB"/>
</dbReference>
<dbReference type="GO" id="GO:0099147">
    <property type="term" value="C:extrinsic component of postsynaptic density membrane"/>
    <property type="evidence" value="ECO:0000266"/>
    <property type="project" value="RGD"/>
</dbReference>
<dbReference type="GO" id="GO:0099243">
    <property type="term" value="C:extrinsic component of synaptic membrane"/>
    <property type="evidence" value="ECO:0000266"/>
    <property type="project" value="RGD"/>
</dbReference>
<dbReference type="GO" id="GO:0098978">
    <property type="term" value="C:glutamatergic synapse"/>
    <property type="evidence" value="ECO:0000266"/>
    <property type="project" value="RGD"/>
</dbReference>
<dbReference type="GO" id="GO:0043025">
    <property type="term" value="C:neuronal cell body"/>
    <property type="evidence" value="ECO:0000250"/>
    <property type="project" value="UniProtKB"/>
</dbReference>
<dbReference type="GO" id="GO:0043204">
    <property type="term" value="C:perikaryon"/>
    <property type="evidence" value="ECO:0007669"/>
    <property type="project" value="UniProtKB-SubCell"/>
</dbReference>
<dbReference type="GO" id="GO:0097060">
    <property type="term" value="C:synaptic membrane"/>
    <property type="evidence" value="ECO:0000266"/>
    <property type="project" value="RGD"/>
</dbReference>
<dbReference type="GO" id="GO:0003190">
    <property type="term" value="P:atrioventricular valve formation"/>
    <property type="evidence" value="ECO:0000250"/>
    <property type="project" value="AgBase"/>
</dbReference>
<dbReference type="GO" id="GO:0060317">
    <property type="term" value="P:cardiac epithelial to mesenchymal transition"/>
    <property type="evidence" value="ECO:0000250"/>
    <property type="project" value="AgBase"/>
</dbReference>
<dbReference type="GO" id="GO:0010629">
    <property type="term" value="P:negative regulation of gene expression"/>
    <property type="evidence" value="ECO:0000250"/>
    <property type="project" value="AgBase"/>
</dbReference>
<dbReference type="GO" id="GO:0023041">
    <property type="term" value="P:neuronal signal transduction"/>
    <property type="evidence" value="ECO:0000250"/>
    <property type="project" value="UniProtKB"/>
</dbReference>
<dbReference type="GO" id="GO:0043065">
    <property type="term" value="P:positive regulation of apoptotic process"/>
    <property type="evidence" value="ECO:0000250"/>
    <property type="project" value="UniProtKB"/>
</dbReference>
<dbReference type="GO" id="GO:0010718">
    <property type="term" value="P:positive regulation of epithelial to mesenchymal transition"/>
    <property type="evidence" value="ECO:0000250"/>
    <property type="project" value="AgBase"/>
</dbReference>
<dbReference type="GO" id="GO:0010628">
    <property type="term" value="P:positive regulation of gene expression"/>
    <property type="evidence" value="ECO:0000250"/>
    <property type="project" value="AgBase"/>
</dbReference>
<dbReference type="GO" id="GO:0030516">
    <property type="term" value="P:regulation of axon extension"/>
    <property type="evidence" value="ECO:0000250"/>
    <property type="project" value="UniProtKB"/>
</dbReference>
<dbReference type="GO" id="GO:0098696">
    <property type="term" value="P:regulation of neurotransmitter receptor localization to postsynaptic specialization membrane"/>
    <property type="evidence" value="ECO:0000314"/>
    <property type="project" value="SynGO"/>
</dbReference>
<dbReference type="GO" id="GO:0007165">
    <property type="term" value="P:signal transduction"/>
    <property type="evidence" value="ECO:0000318"/>
    <property type="project" value="GO_Central"/>
</dbReference>
<dbReference type="InterPro" id="IPR022082">
    <property type="entry name" value="Noelin_dom"/>
</dbReference>
<dbReference type="InterPro" id="IPR003112">
    <property type="entry name" value="Olfac-like_dom"/>
</dbReference>
<dbReference type="InterPro" id="IPR050605">
    <property type="entry name" value="Olfactomedin-like_domain"/>
</dbReference>
<dbReference type="InterPro" id="IPR011044">
    <property type="entry name" value="Quino_amine_DH_bsu"/>
</dbReference>
<dbReference type="PANTHER" id="PTHR23192:SF34">
    <property type="entry name" value="NOELIN"/>
    <property type="match status" value="1"/>
</dbReference>
<dbReference type="PANTHER" id="PTHR23192">
    <property type="entry name" value="OLFACTOMEDIN-RELATED"/>
    <property type="match status" value="1"/>
</dbReference>
<dbReference type="Pfam" id="PF12308">
    <property type="entry name" value="Noelin-1"/>
    <property type="match status" value="1"/>
</dbReference>
<dbReference type="Pfam" id="PF02191">
    <property type="entry name" value="OLF"/>
    <property type="match status" value="1"/>
</dbReference>
<dbReference type="SMART" id="SM00284">
    <property type="entry name" value="OLF"/>
    <property type="match status" value="1"/>
</dbReference>
<dbReference type="SUPFAM" id="SSF50969">
    <property type="entry name" value="YVTN repeat-like/Quinoprotein amine dehydrogenase"/>
    <property type="match status" value="1"/>
</dbReference>
<dbReference type="PROSITE" id="PS00014">
    <property type="entry name" value="ER_TARGET"/>
    <property type="match status" value="1"/>
</dbReference>
<dbReference type="PROSITE" id="PS51132">
    <property type="entry name" value="OLF"/>
    <property type="match status" value="1"/>
</dbReference>
<name>NOE1_RAT</name>
<gene>
    <name type="primary">Olfm1</name>
    <name type="synonym">D2Sut1e</name>
    <name type="synonym">Noe1</name>
    <name type="synonym">Noel</name>
    <name type="synonym">Noel1</name>
</gene>
<protein>
    <recommendedName>
        <fullName>Noelin</fullName>
    </recommendedName>
    <alternativeName>
        <fullName>1B426B</fullName>
    </alternativeName>
    <alternativeName>
        <fullName>Neuronal olfactomedin-related ER localized protein</fullName>
    </alternativeName>
    <alternativeName>
        <fullName evidence="8">Olfactomedin-1</fullName>
    </alternativeName>
    <alternativeName>
        <fullName evidence="8">Pancortin</fullName>
    </alternativeName>
</protein>
<evidence type="ECO:0000250" key="1">
    <source>
        <dbReference type="UniProtKB" id="O88998"/>
    </source>
</evidence>
<evidence type="ECO:0000250" key="2">
    <source>
        <dbReference type="UniProtKB" id="Q99784"/>
    </source>
</evidence>
<evidence type="ECO:0000250" key="3">
    <source>
        <dbReference type="UniProtKB" id="Q9IAK4"/>
    </source>
</evidence>
<evidence type="ECO:0000255" key="4"/>
<evidence type="ECO:0000255" key="5">
    <source>
        <dbReference type="PROSITE-ProRule" id="PRU00446"/>
    </source>
</evidence>
<evidence type="ECO:0000269" key="6">
    <source>
    </source>
</evidence>
<evidence type="ECO:0000269" key="7">
    <source>
    </source>
</evidence>
<evidence type="ECO:0000303" key="8">
    <source>
    </source>
</evidence>
<evidence type="ECO:0000303" key="9">
    <source>
    </source>
</evidence>
<evidence type="ECO:0000305" key="10">
    <source>
    </source>
</evidence>
<comment type="function">
    <text evidence="1 3">Contributes to the regulation of axonal growth in the embryonic and adult central nervous system by inhibiting interactions between RTN4R and LINGO1. Inhibits RTN4R-mediated axon growth cone collapse (By similarity). May play an important role in regulating the production of neural crest cells by the neural tube (By similarity). May be required for normal responses to olfactory stimuli (By similarity).</text>
</comment>
<comment type="subunit">
    <text evidence="1 2 6">Homotetramer; disulfide-linked. Dimer of dimers, giving rise to a V-shaped homotretramer. Isoform 1 and isoform 3 interact with RTN4R. Identified in a complex with RTN4R and LINGO1 (By similarity). Peripherally associated with AMPAR complex. AMPAR complex consists of an inner core made of 4 pore-forming GluA/GRIA proteins (GRIA1, GRIA2, GRIA3 and GRIA4) and 4 major auxiliary subunits arranged in a twofold symmetry. One of the two pairs of distinct binding sites is occupied either by CNIH2, CNIH3 or CACNG2, CACNG3. The other harbors CACNG2, CACNG3, CACNG4, CACNG8 or GSG1L. This inner core of AMPAR complex is complemented by outer core constituents binding directly to the GluA/GRIA proteins at sites distinct from the interaction sites of the inner core constituents. Outer core constituents include at least PRRT1, PRRT2, CKAMP44/SHISA9, FRRS1L and NRN1. The proteins of the inner and outer core serve as a platform for other, more peripherally associated AMPAR constituents, including OLFM1. Alone or in combination, these auxiliary subunits control the gating and pharmacology of the AMPAR complex and profoundly impact their biogenesis and protein processing (PubMed:22632720). Interacts with OLFM2 (By similarity).</text>
</comment>
<comment type="subcellular location">
    <subcellularLocation>
        <location evidence="1 10">Secreted</location>
    </subcellularLocation>
    <subcellularLocation>
        <location evidence="1 10">Synapse</location>
    </subcellularLocation>
    <subcellularLocation>
        <location evidence="1">Endoplasmic reticulum</location>
    </subcellularLocation>
    <subcellularLocation>
        <location evidence="1">Cell projection</location>
        <location evidence="1">Axon</location>
    </subcellularLocation>
    <subcellularLocation>
        <location evidence="1">Perikaryon</location>
    </subcellularLocation>
</comment>
<comment type="alternative products">
    <event type="alternative splicing"/>
    <isoform>
        <id>Q62609-1</id>
        <name>1</name>
        <name>BMZ</name>
        <sequence type="displayed"/>
    </isoform>
    <isoform>
        <id>Q62609-2</id>
        <name>2</name>
        <name>BMY</name>
        <sequence type="described" ref="VSP_003766 VSP_003767"/>
    </isoform>
    <isoform>
        <id>Q62609-3</id>
        <name>3</name>
        <name>AMZ</name>
        <sequence type="described" ref="VSP_003765"/>
    </isoform>
    <isoform>
        <id>Q62609-4</id>
        <name>4</name>
        <name>AMY</name>
        <sequence type="described" ref="VSP_003765 VSP_003766 VSP_003767"/>
    </isoform>
</comment>
<comment type="tissue specificity">
    <text evidence="6 7">Expressed in the brain (at protein level) (PubMed:22632720, PubMed:7932877). Expressed in the brain, predominantly in the cortex and hippocampus. In the pituitary only the two A-type and in the adrenal glands only the two B-type forms were detected (PubMed:7932877).</text>
</comment>
<comment type="domain">
    <text evidence="1">The protein contains a globular N-terminal tetramerization domain, a long stalk formed by the coiled coil region and a C-terminal olfactomedin-like domain. Interactions between dimers are mediated by the coiled coil region. The dimers interact mostly via the N-terminal tetramerization domain, giving rise to a V-shaped overall architecture of the tetramer.</text>
</comment>
<comment type="PTM">
    <text>In isoform 3 and isoform 4, the signal peptide is predicted to end in position 17.</text>
</comment>
<keyword id="KW-0025">Alternative splicing</keyword>
<keyword id="KW-0966">Cell projection</keyword>
<keyword id="KW-0175">Coiled coil</keyword>
<keyword id="KW-0217">Developmental protein</keyword>
<keyword id="KW-1015">Disulfide bond</keyword>
<keyword id="KW-0256">Endoplasmic reticulum</keyword>
<keyword id="KW-0325">Glycoprotein</keyword>
<keyword id="KW-1185">Reference proteome</keyword>
<keyword id="KW-0964">Secreted</keyword>
<keyword id="KW-0732">Signal</keyword>
<keyword id="KW-0770">Synapse</keyword>
<reference key="1">
    <citation type="journal article" date="1994" name="J. Neurosci. Res.">
        <title>Four structurally distinct neuron-specific olfactomedin-related glycoproteins produced by differential promoter utilization and alternative mRNA splicing from a single gene.</title>
        <authorList>
            <person name="Danielson P.E."/>
            <person name="Forss-Petter S."/>
            <person name="Battenberg E.L.F."/>
            <person name="Delecea L."/>
            <person name="Bloom F.E."/>
            <person name="Sutcliffe J.G."/>
        </authorList>
    </citation>
    <scope>NUCLEOTIDE SEQUENCE [MRNA] (ISOFORMS 1; 2; 3 AND 4)</scope>
    <scope>TISSUE SPECIFICITY</scope>
    <source>
        <strain>Sprague-Dawley</strain>
        <tissue>Brain</tissue>
    </source>
</reference>
<reference key="2">
    <citation type="journal article" date="2012" name="Neuron">
        <title>High-resolution proteomics unravel architecture and molecular diversity of native AMPA receptor complexes.</title>
        <authorList>
            <person name="Schwenk J."/>
            <person name="Harmel N."/>
            <person name="Brechet A."/>
            <person name="Zolles G."/>
            <person name="Berkefeld H."/>
            <person name="Muller C.S."/>
            <person name="Bildl W."/>
            <person name="Baehrens D."/>
            <person name="Huber B."/>
            <person name="Kulik A."/>
            <person name="Klocker N."/>
            <person name="Schulte U."/>
            <person name="Fakler B."/>
        </authorList>
    </citation>
    <scope>IDENTIFICATION IN AMPAR COMPLEX</scope>
    <scope>IDENTIFICATION BY MASS SPECTROMETRY</scope>
    <scope>SUBCELLULAR LOCATION</scope>
    <scope>TISSUE SPECIFICITY</scope>
</reference>
<accession>Q62609</accession>
<accession>Q62606</accession>
<accession>Q62607</accession>
<accession>Q62608</accession>